<accession>Q3YSC6</accession>
<dbReference type="EC" id="5.4.99.25" evidence="1"/>
<dbReference type="EMBL" id="CP000107">
    <property type="protein sequence ID" value="AAZ68379.1"/>
    <property type="molecule type" value="Genomic_DNA"/>
</dbReference>
<dbReference type="RefSeq" id="WP_011304457.1">
    <property type="nucleotide sequence ID" value="NC_007354.1"/>
</dbReference>
<dbReference type="SMR" id="Q3YSC6"/>
<dbReference type="FunCoup" id="Q3YSC6">
    <property type="interactions" value="306"/>
</dbReference>
<dbReference type="STRING" id="269484.Ecaj_0336"/>
<dbReference type="KEGG" id="ecn:Ecaj_0336"/>
<dbReference type="eggNOG" id="COG0130">
    <property type="taxonomic scope" value="Bacteria"/>
</dbReference>
<dbReference type="HOGENOM" id="CLU_032087_0_3_5"/>
<dbReference type="InParanoid" id="Q3YSC6"/>
<dbReference type="Proteomes" id="UP000000435">
    <property type="component" value="Chromosome"/>
</dbReference>
<dbReference type="GO" id="GO:0003723">
    <property type="term" value="F:RNA binding"/>
    <property type="evidence" value="ECO:0007669"/>
    <property type="project" value="InterPro"/>
</dbReference>
<dbReference type="GO" id="GO:0160148">
    <property type="term" value="F:tRNA pseudouridine(55) synthase activity"/>
    <property type="evidence" value="ECO:0007669"/>
    <property type="project" value="UniProtKB-EC"/>
</dbReference>
<dbReference type="GO" id="GO:1990481">
    <property type="term" value="P:mRNA pseudouridine synthesis"/>
    <property type="evidence" value="ECO:0007669"/>
    <property type="project" value="TreeGrafter"/>
</dbReference>
<dbReference type="GO" id="GO:0031119">
    <property type="term" value="P:tRNA pseudouridine synthesis"/>
    <property type="evidence" value="ECO:0007669"/>
    <property type="project" value="UniProtKB-UniRule"/>
</dbReference>
<dbReference type="CDD" id="cd02573">
    <property type="entry name" value="PseudoU_synth_EcTruB"/>
    <property type="match status" value="1"/>
</dbReference>
<dbReference type="Gene3D" id="3.30.2350.10">
    <property type="entry name" value="Pseudouridine synthase"/>
    <property type="match status" value="1"/>
</dbReference>
<dbReference type="HAMAP" id="MF_01080">
    <property type="entry name" value="TruB_bact"/>
    <property type="match status" value="1"/>
</dbReference>
<dbReference type="InterPro" id="IPR020103">
    <property type="entry name" value="PsdUridine_synth_cat_dom_sf"/>
</dbReference>
<dbReference type="InterPro" id="IPR002501">
    <property type="entry name" value="PsdUridine_synth_N"/>
</dbReference>
<dbReference type="InterPro" id="IPR014780">
    <property type="entry name" value="tRNA_psdUridine_synth_TruB"/>
</dbReference>
<dbReference type="InterPro" id="IPR032819">
    <property type="entry name" value="TruB_C"/>
</dbReference>
<dbReference type="NCBIfam" id="TIGR00431">
    <property type="entry name" value="TruB"/>
    <property type="match status" value="1"/>
</dbReference>
<dbReference type="PANTHER" id="PTHR13767:SF2">
    <property type="entry name" value="PSEUDOURIDYLATE SYNTHASE TRUB1"/>
    <property type="match status" value="1"/>
</dbReference>
<dbReference type="PANTHER" id="PTHR13767">
    <property type="entry name" value="TRNA-PSEUDOURIDINE SYNTHASE"/>
    <property type="match status" value="1"/>
</dbReference>
<dbReference type="Pfam" id="PF16198">
    <property type="entry name" value="TruB_C_2"/>
    <property type="match status" value="1"/>
</dbReference>
<dbReference type="Pfam" id="PF01509">
    <property type="entry name" value="TruB_N"/>
    <property type="match status" value="1"/>
</dbReference>
<dbReference type="SUPFAM" id="SSF55120">
    <property type="entry name" value="Pseudouridine synthase"/>
    <property type="match status" value="1"/>
</dbReference>
<comment type="function">
    <text evidence="1">Responsible for synthesis of pseudouridine from uracil-55 in the psi GC loop of transfer RNAs.</text>
</comment>
<comment type="catalytic activity">
    <reaction evidence="1">
        <text>uridine(55) in tRNA = pseudouridine(55) in tRNA</text>
        <dbReference type="Rhea" id="RHEA:42532"/>
        <dbReference type="Rhea" id="RHEA-COMP:10101"/>
        <dbReference type="Rhea" id="RHEA-COMP:10102"/>
        <dbReference type="ChEBI" id="CHEBI:65314"/>
        <dbReference type="ChEBI" id="CHEBI:65315"/>
        <dbReference type="EC" id="5.4.99.25"/>
    </reaction>
</comment>
<comment type="similarity">
    <text evidence="1">Belongs to the pseudouridine synthase TruB family. Type 1 subfamily.</text>
</comment>
<organism>
    <name type="scientific">Ehrlichia canis (strain Jake)</name>
    <dbReference type="NCBI Taxonomy" id="269484"/>
    <lineage>
        <taxon>Bacteria</taxon>
        <taxon>Pseudomonadati</taxon>
        <taxon>Pseudomonadota</taxon>
        <taxon>Alphaproteobacteria</taxon>
        <taxon>Rickettsiales</taxon>
        <taxon>Anaplasmataceae</taxon>
        <taxon>Ehrlichia</taxon>
    </lineage>
</organism>
<sequence>MYGWVNLDKPCGMSSALAVNLVKRILNVKKAGHAGTLDPLASGVLPIAIGEATKVMPYAVDVIKSYLFTVQWGEQRTTDDAEGEIVDKSDMIPCVENIKKIIPDFIGLLKQVPPSFSAVHVNGVRAFELARSGQDVNLSSRFVDVLELKLLSFDVENNKADFYLSCRKGVYVRSIARDLGIKLGCLGYVTKLQRVRVGCFRKKNAITLEMLKTLYSTNCKSSYLLPLWYVLQDIKHLNNFFSELEIKKLKNGQNIELNNLYVIRNCDICYVSTGNVPVAICSIVNSVVRPVRIFNVRGLVF</sequence>
<gene>
    <name evidence="1" type="primary">truB</name>
    <name type="ordered locus">Ecaj_0336</name>
</gene>
<reference key="1">
    <citation type="journal article" date="2006" name="J. Bacteriol.">
        <title>The genome of the obligately intracellular bacterium Ehrlichia canis reveals themes of complex membrane structure and immune evasion strategies.</title>
        <authorList>
            <person name="Mavromatis K."/>
            <person name="Doyle C.K."/>
            <person name="Lykidis A."/>
            <person name="Ivanova N."/>
            <person name="Francino M.P."/>
            <person name="Chain P."/>
            <person name="Shin M."/>
            <person name="Malfatti S."/>
            <person name="Larimer F."/>
            <person name="Copeland A."/>
            <person name="Detter J.C."/>
            <person name="Land M."/>
            <person name="Richardson P.M."/>
            <person name="Yu X.J."/>
            <person name="Walker D.H."/>
            <person name="McBride J.W."/>
            <person name="Kyrpides N.C."/>
        </authorList>
    </citation>
    <scope>NUCLEOTIDE SEQUENCE [LARGE SCALE GENOMIC DNA]</scope>
    <source>
        <strain>Jake</strain>
    </source>
</reference>
<proteinExistence type="inferred from homology"/>
<keyword id="KW-0413">Isomerase</keyword>
<keyword id="KW-0819">tRNA processing</keyword>
<feature type="chain" id="PRO_0000229357" description="tRNA pseudouridine synthase B">
    <location>
        <begin position="1"/>
        <end position="301"/>
    </location>
</feature>
<feature type="active site" description="Nucleophile" evidence="1">
    <location>
        <position position="38"/>
    </location>
</feature>
<evidence type="ECO:0000255" key="1">
    <source>
        <dbReference type="HAMAP-Rule" id="MF_01080"/>
    </source>
</evidence>
<name>TRUB_EHRCJ</name>
<protein>
    <recommendedName>
        <fullName evidence="1">tRNA pseudouridine synthase B</fullName>
        <ecNumber evidence="1">5.4.99.25</ecNumber>
    </recommendedName>
    <alternativeName>
        <fullName evidence="1">tRNA pseudouridine(55) synthase</fullName>
        <shortName evidence="1">Psi55 synthase</shortName>
    </alternativeName>
    <alternativeName>
        <fullName evidence="1">tRNA pseudouridylate synthase</fullName>
    </alternativeName>
    <alternativeName>
        <fullName evidence="1">tRNA-uridine isomerase</fullName>
    </alternativeName>
</protein>